<gene>
    <name evidence="1" type="primary">pepT</name>
    <name type="ordered locus">LMOf2365_1805</name>
</gene>
<comment type="function">
    <text evidence="1">Cleaves the N-terminal amino acid of tripeptides.</text>
</comment>
<comment type="catalytic activity">
    <reaction evidence="1">
        <text>Release of the N-terminal residue from a tripeptide.</text>
        <dbReference type="EC" id="3.4.11.4"/>
    </reaction>
</comment>
<comment type="cofactor">
    <cofactor evidence="1">
        <name>Zn(2+)</name>
        <dbReference type="ChEBI" id="CHEBI:29105"/>
    </cofactor>
    <text evidence="1">Binds 2 Zn(2+) ions per subunit.</text>
</comment>
<comment type="subcellular location">
    <subcellularLocation>
        <location evidence="1">Cytoplasm</location>
    </subcellularLocation>
</comment>
<comment type="similarity">
    <text evidence="1">Belongs to the peptidase M20B family.</text>
</comment>
<accession>Q71YN8</accession>
<dbReference type="EC" id="3.4.11.4" evidence="1"/>
<dbReference type="EMBL" id="AE017262">
    <property type="protein sequence ID" value="AAT04576.1"/>
    <property type="molecule type" value="Genomic_DNA"/>
</dbReference>
<dbReference type="RefSeq" id="WP_010958946.1">
    <property type="nucleotide sequence ID" value="NC_002973.6"/>
</dbReference>
<dbReference type="SMR" id="Q71YN8"/>
<dbReference type="MEROPS" id="M20.003"/>
<dbReference type="KEGG" id="lmf:LMOf2365_1805"/>
<dbReference type="HOGENOM" id="CLU_053676_0_0_9"/>
<dbReference type="GO" id="GO:0005829">
    <property type="term" value="C:cytosol"/>
    <property type="evidence" value="ECO:0007669"/>
    <property type="project" value="TreeGrafter"/>
</dbReference>
<dbReference type="GO" id="GO:0008237">
    <property type="term" value="F:metallopeptidase activity"/>
    <property type="evidence" value="ECO:0007669"/>
    <property type="project" value="UniProtKB-KW"/>
</dbReference>
<dbReference type="GO" id="GO:0045148">
    <property type="term" value="F:tripeptide aminopeptidase activity"/>
    <property type="evidence" value="ECO:0007669"/>
    <property type="project" value="UniProtKB-UniRule"/>
</dbReference>
<dbReference type="GO" id="GO:0008270">
    <property type="term" value="F:zinc ion binding"/>
    <property type="evidence" value="ECO:0007669"/>
    <property type="project" value="UniProtKB-UniRule"/>
</dbReference>
<dbReference type="GO" id="GO:0043171">
    <property type="term" value="P:peptide catabolic process"/>
    <property type="evidence" value="ECO:0007669"/>
    <property type="project" value="UniProtKB-UniRule"/>
</dbReference>
<dbReference type="GO" id="GO:0006508">
    <property type="term" value="P:proteolysis"/>
    <property type="evidence" value="ECO:0007669"/>
    <property type="project" value="UniProtKB-UniRule"/>
</dbReference>
<dbReference type="CDD" id="cd03892">
    <property type="entry name" value="M20_peptT"/>
    <property type="match status" value="1"/>
</dbReference>
<dbReference type="FunFam" id="3.30.70.360:FF:000002">
    <property type="entry name" value="Peptidase T"/>
    <property type="match status" value="1"/>
</dbReference>
<dbReference type="Gene3D" id="3.30.70.360">
    <property type="match status" value="1"/>
</dbReference>
<dbReference type="Gene3D" id="3.40.630.10">
    <property type="entry name" value="Zn peptidases"/>
    <property type="match status" value="1"/>
</dbReference>
<dbReference type="HAMAP" id="MF_00550">
    <property type="entry name" value="Aminopeptidase_M20"/>
    <property type="match status" value="1"/>
</dbReference>
<dbReference type="InterPro" id="IPR001261">
    <property type="entry name" value="ArgE/DapE_CS"/>
</dbReference>
<dbReference type="InterPro" id="IPR036264">
    <property type="entry name" value="Bact_exopeptidase_dim_dom"/>
</dbReference>
<dbReference type="InterPro" id="IPR002933">
    <property type="entry name" value="Peptidase_M20"/>
</dbReference>
<dbReference type="InterPro" id="IPR011650">
    <property type="entry name" value="Peptidase_M20_dimer"/>
</dbReference>
<dbReference type="InterPro" id="IPR010161">
    <property type="entry name" value="Peptidase_M20B"/>
</dbReference>
<dbReference type="NCBIfam" id="TIGR01882">
    <property type="entry name" value="peptidase-T"/>
    <property type="match status" value="1"/>
</dbReference>
<dbReference type="NCBIfam" id="NF003976">
    <property type="entry name" value="PRK05469.1"/>
    <property type="match status" value="1"/>
</dbReference>
<dbReference type="NCBIfam" id="NF009920">
    <property type="entry name" value="PRK13381.1"/>
    <property type="match status" value="1"/>
</dbReference>
<dbReference type="PANTHER" id="PTHR42994">
    <property type="entry name" value="PEPTIDASE T"/>
    <property type="match status" value="1"/>
</dbReference>
<dbReference type="PANTHER" id="PTHR42994:SF1">
    <property type="entry name" value="PEPTIDASE T"/>
    <property type="match status" value="1"/>
</dbReference>
<dbReference type="Pfam" id="PF07687">
    <property type="entry name" value="M20_dimer"/>
    <property type="match status" value="1"/>
</dbReference>
<dbReference type="Pfam" id="PF01546">
    <property type="entry name" value="Peptidase_M20"/>
    <property type="match status" value="1"/>
</dbReference>
<dbReference type="PIRSF" id="PIRSF037215">
    <property type="entry name" value="Peptidase_M20B"/>
    <property type="match status" value="1"/>
</dbReference>
<dbReference type="SUPFAM" id="SSF55031">
    <property type="entry name" value="Bacterial exopeptidase dimerisation domain"/>
    <property type="match status" value="1"/>
</dbReference>
<dbReference type="SUPFAM" id="SSF53187">
    <property type="entry name" value="Zn-dependent exopeptidases"/>
    <property type="match status" value="1"/>
</dbReference>
<dbReference type="PROSITE" id="PS00758">
    <property type="entry name" value="ARGE_DAPE_CPG2_1"/>
    <property type="match status" value="1"/>
</dbReference>
<dbReference type="PROSITE" id="PS00759">
    <property type="entry name" value="ARGE_DAPE_CPG2_2"/>
    <property type="match status" value="1"/>
</dbReference>
<organism>
    <name type="scientific">Listeria monocytogenes serotype 4b (strain F2365)</name>
    <dbReference type="NCBI Taxonomy" id="265669"/>
    <lineage>
        <taxon>Bacteria</taxon>
        <taxon>Bacillati</taxon>
        <taxon>Bacillota</taxon>
        <taxon>Bacilli</taxon>
        <taxon>Bacillales</taxon>
        <taxon>Listeriaceae</taxon>
        <taxon>Listeria</taxon>
    </lineage>
</organism>
<name>PEPT_LISMF</name>
<protein>
    <recommendedName>
        <fullName evidence="1">Peptidase T</fullName>
        <ecNumber evidence="1">3.4.11.4</ecNumber>
    </recommendedName>
    <alternativeName>
        <fullName evidence="1">Aminotripeptidase</fullName>
        <shortName evidence="1">Tripeptidase</shortName>
    </alternativeName>
    <alternativeName>
        <fullName evidence="1">Tripeptide aminopeptidase</fullName>
    </alternativeName>
</protein>
<feature type="chain" id="PRO_0000185305" description="Peptidase T">
    <location>
        <begin position="1"/>
        <end position="410"/>
    </location>
</feature>
<feature type="active site" evidence="1">
    <location>
        <position position="81"/>
    </location>
</feature>
<feature type="active site" description="Proton acceptor" evidence="1">
    <location>
        <position position="176"/>
    </location>
</feature>
<feature type="binding site" evidence="1">
    <location>
        <position position="79"/>
    </location>
    <ligand>
        <name>Zn(2+)</name>
        <dbReference type="ChEBI" id="CHEBI:29105"/>
        <label>1</label>
    </ligand>
</feature>
<feature type="binding site" evidence="1">
    <location>
        <position position="142"/>
    </location>
    <ligand>
        <name>Zn(2+)</name>
        <dbReference type="ChEBI" id="CHEBI:29105"/>
        <label>1</label>
    </ligand>
</feature>
<feature type="binding site" evidence="1">
    <location>
        <position position="142"/>
    </location>
    <ligand>
        <name>Zn(2+)</name>
        <dbReference type="ChEBI" id="CHEBI:29105"/>
        <label>2</label>
    </ligand>
</feature>
<feature type="binding site" evidence="1">
    <location>
        <position position="177"/>
    </location>
    <ligand>
        <name>Zn(2+)</name>
        <dbReference type="ChEBI" id="CHEBI:29105"/>
        <label>2</label>
    </ligand>
</feature>
<feature type="binding site" evidence="1">
    <location>
        <position position="199"/>
    </location>
    <ligand>
        <name>Zn(2+)</name>
        <dbReference type="ChEBI" id="CHEBI:29105"/>
        <label>1</label>
    </ligand>
</feature>
<feature type="binding site" evidence="1">
    <location>
        <position position="381"/>
    </location>
    <ligand>
        <name>Zn(2+)</name>
        <dbReference type="ChEBI" id="CHEBI:29105"/>
        <label>2</label>
    </ligand>
</feature>
<sequence length="410" mass="45681">MKEELLKRFTKYVKVDTQSNEESKACPTTPGQMELANILVTELKEIGMQEVTVDEFGYVMATLPSNTTKEVPVIGFLAHLDTATDLTGKNVQPQVHENYDGKDIVLNKDLNVVLSPKQFPELADYNGKTLITTDGTTLLGADDKAGITEIMVAMNYLINHPEIKHGKIRVAFTPDEEIGRGPERFDVEAFGAKYAYTMDGGPLGELEYESFNAAGAKITFNGNSVHPGTAKNKMVNAVKMAMEFNAHIPKDEAPEYTEGYEGFYHLISLNGDVEQAKAYYIIRDFDHLKFVERKTHIASIAKELEEKYGEGSVELKLNDQYYNMREKIEPVKEIVDIVSAAMRNLDIEPKISPIRGGTDGAQLSYKGLPTPNIFGGGENFHGKFEYVALESMVKATEVIIEVARLFEEKE</sequence>
<keyword id="KW-0031">Aminopeptidase</keyword>
<keyword id="KW-0963">Cytoplasm</keyword>
<keyword id="KW-0378">Hydrolase</keyword>
<keyword id="KW-0479">Metal-binding</keyword>
<keyword id="KW-0482">Metalloprotease</keyword>
<keyword id="KW-0645">Protease</keyword>
<keyword id="KW-0862">Zinc</keyword>
<proteinExistence type="inferred from homology"/>
<reference key="1">
    <citation type="journal article" date="2004" name="Nucleic Acids Res.">
        <title>Whole genome comparisons of serotype 4b and 1/2a strains of the food-borne pathogen Listeria monocytogenes reveal new insights into the core genome components of this species.</title>
        <authorList>
            <person name="Nelson K.E."/>
            <person name="Fouts D.E."/>
            <person name="Mongodin E.F."/>
            <person name="Ravel J."/>
            <person name="DeBoy R.T."/>
            <person name="Kolonay J.F."/>
            <person name="Rasko D.A."/>
            <person name="Angiuoli S.V."/>
            <person name="Gill S.R."/>
            <person name="Paulsen I.T."/>
            <person name="Peterson J.D."/>
            <person name="White O."/>
            <person name="Nelson W.C."/>
            <person name="Nierman W.C."/>
            <person name="Beanan M.J."/>
            <person name="Brinkac L.M."/>
            <person name="Daugherty S.C."/>
            <person name="Dodson R.J."/>
            <person name="Durkin A.S."/>
            <person name="Madupu R."/>
            <person name="Haft D.H."/>
            <person name="Selengut J."/>
            <person name="Van Aken S.E."/>
            <person name="Khouri H.M."/>
            <person name="Fedorova N."/>
            <person name="Forberger H.A."/>
            <person name="Tran B."/>
            <person name="Kathariou S."/>
            <person name="Wonderling L.D."/>
            <person name="Uhlich G.A."/>
            <person name="Bayles D.O."/>
            <person name="Luchansky J.B."/>
            <person name="Fraser C.M."/>
        </authorList>
    </citation>
    <scope>NUCLEOTIDE SEQUENCE [LARGE SCALE GENOMIC DNA]</scope>
    <source>
        <strain>F2365</strain>
    </source>
</reference>
<evidence type="ECO:0000255" key="1">
    <source>
        <dbReference type="HAMAP-Rule" id="MF_00550"/>
    </source>
</evidence>